<feature type="signal peptide" evidence="2">
    <location>
        <begin position="1"/>
        <end position="26"/>
    </location>
</feature>
<feature type="chain" id="PRO_5000262091" description="Lectin-like protein BA14k">
    <location>
        <begin position="27"/>
        <end position="151"/>
    </location>
</feature>
<feature type="transmembrane region" description="Helical" evidence="2">
    <location>
        <begin position="83"/>
        <end position="103"/>
    </location>
</feature>
<name>14KL_BRUA4</name>
<evidence type="ECO:0000250" key="1"/>
<evidence type="ECO:0000255" key="2"/>
<evidence type="ECO:0000305" key="3"/>
<proteinExistence type="inferred from homology"/>
<keyword id="KW-1003">Cell membrane</keyword>
<keyword id="KW-0430">Lectin</keyword>
<keyword id="KW-0472">Membrane</keyword>
<keyword id="KW-1185">Reference proteome</keyword>
<keyword id="KW-0732">Signal</keyword>
<keyword id="KW-0812">Transmembrane</keyword>
<keyword id="KW-1133">Transmembrane helix</keyword>
<keyword id="KW-0843">Virulence</keyword>
<sequence length="151" mass="17666">MNIFKQTCVGAFAVIFGATSIAPTMAAPLNLERPVINHNVEQVRDHRRPPRHYNGHRPHRPGYWNGHRGYRHYRHGYRRYNDGWWYPLAAFGAGAIIGGAVSQPRPVYRAPRMSNAHVQWCYNRYKSYRSSDNTFQPYNGPRRQCYSPYSR</sequence>
<dbReference type="EMBL" id="CP000759">
    <property type="protein sequence ID" value="ABS16589.1"/>
    <property type="molecule type" value="Genomic_DNA"/>
</dbReference>
<dbReference type="RefSeq" id="WP_012093240.1">
    <property type="nucleotide sequence ID" value="NC_009668.1"/>
</dbReference>
<dbReference type="STRING" id="439375.Oant_3884"/>
<dbReference type="KEGG" id="oan:Oant_3884"/>
<dbReference type="PATRIC" id="fig|439375.7.peg.4053"/>
<dbReference type="eggNOG" id="ENOG5033457">
    <property type="taxonomic scope" value="Bacteria"/>
</dbReference>
<dbReference type="HOGENOM" id="CLU_095992_0_0_5"/>
<dbReference type="PhylomeDB" id="A6X5T5"/>
<dbReference type="Proteomes" id="UP000002301">
    <property type="component" value="Chromosome 2"/>
</dbReference>
<dbReference type="GO" id="GO:0005886">
    <property type="term" value="C:plasma membrane"/>
    <property type="evidence" value="ECO:0007669"/>
    <property type="project" value="UniProtKB-SubCell"/>
</dbReference>
<dbReference type="GO" id="GO:0030246">
    <property type="term" value="F:carbohydrate binding"/>
    <property type="evidence" value="ECO:0007669"/>
    <property type="project" value="UniProtKB-KW"/>
</dbReference>
<dbReference type="InterPro" id="IPR012413">
    <property type="entry name" value="BA14K"/>
</dbReference>
<dbReference type="Pfam" id="PF07886">
    <property type="entry name" value="BA14K"/>
    <property type="match status" value="1"/>
</dbReference>
<accession>A6X5T5</accession>
<comment type="function">
    <text evidence="1">Has immunoglobulin-binding and hemagglutination properties, and can bind to mannose. Essential for virulence. May be involved in LPS biosynthesis or polysaccharide transport (By similarity).</text>
</comment>
<comment type="subcellular location">
    <subcellularLocation>
        <location evidence="3">Cell membrane</location>
        <topology evidence="3">Single-pass membrane protein</topology>
    </subcellularLocation>
</comment>
<comment type="similarity">
    <text evidence="3">Belongs to the BA14k family.</text>
</comment>
<protein>
    <recommendedName>
        <fullName>Lectin-like protein BA14k</fullName>
    </recommendedName>
</protein>
<gene>
    <name type="ordered locus">Oant_3884</name>
</gene>
<reference key="1">
    <citation type="journal article" date="2011" name="J. Bacteriol.">
        <title>Genome of Ochrobactrum anthropi ATCC 49188 T, a versatile opportunistic pathogen and symbiont of several eukaryotic hosts.</title>
        <authorList>
            <person name="Chain P.S."/>
            <person name="Lang D.M."/>
            <person name="Comerci D.J."/>
            <person name="Malfatti S.A."/>
            <person name="Vergez L.M."/>
            <person name="Shin M."/>
            <person name="Ugalde R.A."/>
            <person name="Garcia E."/>
            <person name="Tolmasky M.E."/>
        </authorList>
    </citation>
    <scope>NUCLEOTIDE SEQUENCE [LARGE SCALE GENOMIC DNA]</scope>
    <source>
        <strain>ATCC 49188 / DSM 6882 / CCUG 24695 / JCM 21032 / LMG 3331 / NBRC 15819 / NCTC 12168 / Alc 37</strain>
    </source>
</reference>
<organism>
    <name type="scientific">Brucella anthropi (strain ATCC 49188 / DSM 6882 / CCUG 24695 / JCM 21032 / LMG 3331 / NBRC 15819 / NCTC 12168 / Alc 37)</name>
    <name type="common">Ochrobactrum anthropi</name>
    <dbReference type="NCBI Taxonomy" id="439375"/>
    <lineage>
        <taxon>Bacteria</taxon>
        <taxon>Pseudomonadati</taxon>
        <taxon>Pseudomonadota</taxon>
        <taxon>Alphaproteobacteria</taxon>
        <taxon>Hyphomicrobiales</taxon>
        <taxon>Brucellaceae</taxon>
        <taxon>Brucella/Ochrobactrum group</taxon>
        <taxon>Brucella</taxon>
    </lineage>
</organism>